<feature type="chain" id="PRO_0000073170" description="Ovomucoid">
    <location>
        <begin position="1" status="less than"/>
        <end position="54" status="greater than"/>
    </location>
</feature>
<feature type="domain" description="Kazal-like" evidence="1">
    <location>
        <begin position="4"/>
        <end position="54"/>
    </location>
</feature>
<feature type="site" description="Reactive bond 3">
    <location>
        <begin position="16"/>
        <end position="17"/>
    </location>
</feature>
<feature type="glycosylation site" description="N-linked (GlcNAc...) asparagine">
    <location>
        <position position="43"/>
    </location>
</feature>
<feature type="disulfide bond">
    <location>
        <begin position="6"/>
        <end position="36"/>
    </location>
</feature>
<feature type="disulfide bond">
    <location>
        <begin position="14"/>
        <end position="33"/>
    </location>
</feature>
<feature type="disulfide bond">
    <location>
        <begin position="22"/>
        <end position="54"/>
    </location>
</feature>
<feature type="non-terminal residue">
    <location>
        <position position="1"/>
    </location>
</feature>
<feature type="non-terminal residue">
    <location>
        <position position="54"/>
    </location>
</feature>
<comment type="subcellular location">
    <subcellularLocation>
        <location>Secreted</location>
    </subcellularLocation>
</comment>
<comment type="domain">
    <text>Avian ovomucoid consists of three homologous, tandem Kazal family inhibitory domains.</text>
</comment>
<protein>
    <recommendedName>
        <fullName>Ovomucoid</fullName>
    </recommendedName>
</protein>
<proteinExistence type="evidence at protein level"/>
<evidence type="ECO:0000255" key="1">
    <source>
        <dbReference type="PROSITE-ProRule" id="PRU00798"/>
    </source>
</evidence>
<keyword id="KW-0903">Direct protein sequencing</keyword>
<keyword id="KW-1015">Disulfide bond</keyword>
<keyword id="KW-0325">Glycoprotein</keyword>
<keyword id="KW-0646">Protease inhibitor</keyword>
<keyword id="KW-0677">Repeat</keyword>
<keyword id="KW-0964">Secreted</keyword>
<keyword id="KW-0722">Serine protease inhibitor</keyword>
<organism>
    <name type="scientific">Rhea pennata</name>
    <name type="common">Lesser rhea</name>
    <name type="synonym">Pterocnemia pennata</name>
    <dbReference type="NCBI Taxonomy" id="8795"/>
    <lineage>
        <taxon>Eukaryota</taxon>
        <taxon>Metazoa</taxon>
        <taxon>Chordata</taxon>
        <taxon>Craniata</taxon>
        <taxon>Vertebrata</taxon>
        <taxon>Euteleostomi</taxon>
        <taxon>Archelosauria</taxon>
        <taxon>Archosauria</taxon>
        <taxon>Dinosauria</taxon>
        <taxon>Saurischia</taxon>
        <taxon>Theropoda</taxon>
        <taxon>Coelurosauria</taxon>
        <taxon>Aves</taxon>
        <taxon>Palaeognathae</taxon>
        <taxon>Rheiformes</taxon>
        <taxon>Rheidae</taxon>
        <taxon>Rhea</taxon>
    </lineage>
</organism>
<accession>P67943</accession>
<accession>P05558</accession>
<reference key="1">
    <citation type="journal article" date="1987" name="Biochemistry">
        <title>Ovomucoid third domains from 100 avian species: isolation, sequences, and hypervariability of enzyme-inhibitor contact residues.</title>
        <authorList>
            <person name="Laskowski M. Jr."/>
            <person name="Kato I."/>
            <person name="Ardelt W."/>
            <person name="Cook J."/>
            <person name="Denton A."/>
            <person name="Empie M.W."/>
            <person name="Kohr W.J."/>
            <person name="Park S.J."/>
            <person name="Parks K."/>
            <person name="Schatzley B.L."/>
            <person name="Schoenberger O.L."/>
            <person name="Tashiro M."/>
            <person name="Vichot G."/>
            <person name="Whatley H.E."/>
            <person name="Wieczorek A."/>
            <person name="Wieczorek M."/>
        </authorList>
    </citation>
    <scope>PROTEIN SEQUENCE</scope>
</reference>
<sequence>FATVDCSDHPKPVCSLEYMPLCGSDSKTYSNKCDFCNAVVESNGTLTLSHFGKC</sequence>
<name>IOVO_RHEPE</name>
<dbReference type="PIR" id="H31442">
    <property type="entry name" value="H31442"/>
</dbReference>
<dbReference type="SMR" id="P67943"/>
<dbReference type="GO" id="GO:0005576">
    <property type="term" value="C:extracellular region"/>
    <property type="evidence" value="ECO:0007669"/>
    <property type="project" value="UniProtKB-SubCell"/>
</dbReference>
<dbReference type="GO" id="GO:0004867">
    <property type="term" value="F:serine-type endopeptidase inhibitor activity"/>
    <property type="evidence" value="ECO:0007669"/>
    <property type="project" value="UniProtKB-KW"/>
</dbReference>
<dbReference type="CDD" id="cd00104">
    <property type="entry name" value="KAZAL_FS"/>
    <property type="match status" value="1"/>
</dbReference>
<dbReference type="FunFam" id="3.30.60.30:FF:000037">
    <property type="entry name" value="Ovomucoid"/>
    <property type="match status" value="1"/>
</dbReference>
<dbReference type="Gene3D" id="3.30.60.30">
    <property type="match status" value="1"/>
</dbReference>
<dbReference type="InterPro" id="IPR051597">
    <property type="entry name" value="Bifunctional_prot_inhibitor"/>
</dbReference>
<dbReference type="InterPro" id="IPR002350">
    <property type="entry name" value="Kazal_dom"/>
</dbReference>
<dbReference type="InterPro" id="IPR036058">
    <property type="entry name" value="Kazal_dom_sf"/>
</dbReference>
<dbReference type="InterPro" id="IPR001239">
    <property type="entry name" value="Prot_inh_Kazal-m"/>
</dbReference>
<dbReference type="PANTHER" id="PTHR47729:SF1">
    <property type="entry name" value="OVOMUCOID-LIKE-RELATED"/>
    <property type="match status" value="1"/>
</dbReference>
<dbReference type="PANTHER" id="PTHR47729">
    <property type="entry name" value="SERINE PEPTIDASE INHIBITOR, KAZAL TYPE 2, TANDEM DUPLICATE 1-RELATED"/>
    <property type="match status" value="1"/>
</dbReference>
<dbReference type="Pfam" id="PF00050">
    <property type="entry name" value="Kazal_1"/>
    <property type="match status" value="1"/>
</dbReference>
<dbReference type="PRINTS" id="PR00290">
    <property type="entry name" value="KAZALINHBTR"/>
</dbReference>
<dbReference type="SMART" id="SM00280">
    <property type="entry name" value="KAZAL"/>
    <property type="match status" value="1"/>
</dbReference>
<dbReference type="SUPFAM" id="SSF100895">
    <property type="entry name" value="Kazal-type serine protease inhibitors"/>
    <property type="match status" value="1"/>
</dbReference>
<dbReference type="PROSITE" id="PS00282">
    <property type="entry name" value="KAZAL_1"/>
    <property type="match status" value="1"/>
</dbReference>
<dbReference type="PROSITE" id="PS51465">
    <property type="entry name" value="KAZAL_2"/>
    <property type="match status" value="1"/>
</dbReference>